<evidence type="ECO:0000255" key="1">
    <source>
        <dbReference type="HAMAP-Rule" id="MF_00115"/>
    </source>
</evidence>
<organism>
    <name type="scientific">Pseudomonas putida (strain GB-1)</name>
    <dbReference type="NCBI Taxonomy" id="76869"/>
    <lineage>
        <taxon>Bacteria</taxon>
        <taxon>Pseudomonadati</taxon>
        <taxon>Pseudomonadota</taxon>
        <taxon>Gammaproteobacteria</taxon>
        <taxon>Pseudomonadales</taxon>
        <taxon>Pseudomonadaceae</taxon>
        <taxon>Pseudomonas</taxon>
    </lineage>
</organism>
<name>MSCL_PSEPG</name>
<feature type="chain" id="PRO_1000076043" description="Large-conductance mechanosensitive channel">
    <location>
        <begin position="1"/>
        <end position="139"/>
    </location>
</feature>
<feature type="transmembrane region" description="Helical" evidence="1">
    <location>
        <begin position="9"/>
        <end position="29"/>
    </location>
</feature>
<feature type="transmembrane region" description="Helical" evidence="1">
    <location>
        <begin position="79"/>
        <end position="99"/>
    </location>
</feature>
<accession>B0KHQ5</accession>
<dbReference type="EMBL" id="CP000926">
    <property type="protein sequence ID" value="ABZ00526.1"/>
    <property type="molecule type" value="Genomic_DNA"/>
</dbReference>
<dbReference type="RefSeq" id="WP_012274176.1">
    <property type="nucleotide sequence ID" value="NC_010322.1"/>
</dbReference>
<dbReference type="SMR" id="B0KHQ5"/>
<dbReference type="KEGG" id="ppg:PputGB1_4639"/>
<dbReference type="eggNOG" id="COG1970">
    <property type="taxonomic scope" value="Bacteria"/>
</dbReference>
<dbReference type="HOGENOM" id="CLU_095787_0_0_6"/>
<dbReference type="Proteomes" id="UP000002157">
    <property type="component" value="Chromosome"/>
</dbReference>
<dbReference type="GO" id="GO:0005886">
    <property type="term" value="C:plasma membrane"/>
    <property type="evidence" value="ECO:0007669"/>
    <property type="project" value="UniProtKB-SubCell"/>
</dbReference>
<dbReference type="GO" id="GO:0008381">
    <property type="term" value="F:mechanosensitive monoatomic ion channel activity"/>
    <property type="evidence" value="ECO:0007669"/>
    <property type="project" value="UniProtKB-UniRule"/>
</dbReference>
<dbReference type="FunFam" id="1.10.1200.120:FF:000001">
    <property type="entry name" value="Large-conductance mechanosensitive channel"/>
    <property type="match status" value="1"/>
</dbReference>
<dbReference type="Gene3D" id="1.10.1200.120">
    <property type="entry name" value="Large-conductance mechanosensitive channel, MscL, domain 1"/>
    <property type="match status" value="1"/>
</dbReference>
<dbReference type="HAMAP" id="MF_00115">
    <property type="entry name" value="MscL"/>
    <property type="match status" value="1"/>
</dbReference>
<dbReference type="InterPro" id="IPR019823">
    <property type="entry name" value="Mechanosensitive_channel_CS"/>
</dbReference>
<dbReference type="InterPro" id="IPR001185">
    <property type="entry name" value="MS_channel"/>
</dbReference>
<dbReference type="InterPro" id="IPR037673">
    <property type="entry name" value="MSC/AndL"/>
</dbReference>
<dbReference type="InterPro" id="IPR036019">
    <property type="entry name" value="MscL_channel"/>
</dbReference>
<dbReference type="NCBIfam" id="TIGR00220">
    <property type="entry name" value="mscL"/>
    <property type="match status" value="1"/>
</dbReference>
<dbReference type="NCBIfam" id="NF001843">
    <property type="entry name" value="PRK00567.1-4"/>
    <property type="match status" value="1"/>
</dbReference>
<dbReference type="PANTHER" id="PTHR30266:SF2">
    <property type="entry name" value="LARGE-CONDUCTANCE MECHANOSENSITIVE CHANNEL"/>
    <property type="match status" value="1"/>
</dbReference>
<dbReference type="PANTHER" id="PTHR30266">
    <property type="entry name" value="MECHANOSENSITIVE CHANNEL MSCL"/>
    <property type="match status" value="1"/>
</dbReference>
<dbReference type="Pfam" id="PF01741">
    <property type="entry name" value="MscL"/>
    <property type="match status" value="1"/>
</dbReference>
<dbReference type="PRINTS" id="PR01264">
    <property type="entry name" value="MECHCHANNEL"/>
</dbReference>
<dbReference type="SUPFAM" id="SSF81330">
    <property type="entry name" value="Gated mechanosensitive channel"/>
    <property type="match status" value="1"/>
</dbReference>
<dbReference type="PROSITE" id="PS01327">
    <property type="entry name" value="MSCL"/>
    <property type="match status" value="1"/>
</dbReference>
<gene>
    <name evidence="1" type="primary">mscL</name>
    <name type="ordered locus">PputGB1_4639</name>
</gene>
<proteinExistence type="inferred from homology"/>
<protein>
    <recommendedName>
        <fullName evidence="1">Large-conductance mechanosensitive channel</fullName>
    </recommendedName>
</protein>
<keyword id="KW-0997">Cell inner membrane</keyword>
<keyword id="KW-1003">Cell membrane</keyword>
<keyword id="KW-0407">Ion channel</keyword>
<keyword id="KW-0406">Ion transport</keyword>
<keyword id="KW-0472">Membrane</keyword>
<keyword id="KW-0812">Transmembrane</keyword>
<keyword id="KW-1133">Transmembrane helix</keyword>
<keyword id="KW-0813">Transport</keyword>
<sequence>MGMLNEFKAFAVKGNVVDMAVGIIIGAAFGKIVSSFVGDVIMPPLGLLIGGVDFSDLAITLKAAEGDVPAVVLAYGKFIQTVIDFVIVAFAIFMGVKAINRLKREEAVAPTTPPVPSAEETLLTEIRDLLKTQNQNRLP</sequence>
<comment type="function">
    <text evidence="1">Channel that opens in response to stretch forces in the membrane lipid bilayer. May participate in the regulation of osmotic pressure changes within the cell.</text>
</comment>
<comment type="subunit">
    <text evidence="1">Homopentamer.</text>
</comment>
<comment type="subcellular location">
    <subcellularLocation>
        <location evidence="1">Cell inner membrane</location>
        <topology evidence="1">Multi-pass membrane protein</topology>
    </subcellularLocation>
</comment>
<comment type="similarity">
    <text evidence="1">Belongs to the MscL family.</text>
</comment>
<reference key="1">
    <citation type="submission" date="2008-01" db="EMBL/GenBank/DDBJ databases">
        <title>Complete sequence of Pseudomonas putida GB-1.</title>
        <authorList>
            <consortium name="US DOE Joint Genome Institute"/>
            <person name="Copeland A."/>
            <person name="Lucas S."/>
            <person name="Lapidus A."/>
            <person name="Barry K."/>
            <person name="Glavina del Rio T."/>
            <person name="Dalin E."/>
            <person name="Tice H."/>
            <person name="Pitluck S."/>
            <person name="Bruce D."/>
            <person name="Goodwin L."/>
            <person name="Chertkov O."/>
            <person name="Brettin T."/>
            <person name="Detter J.C."/>
            <person name="Han C."/>
            <person name="Kuske C.R."/>
            <person name="Schmutz J."/>
            <person name="Larimer F."/>
            <person name="Land M."/>
            <person name="Hauser L."/>
            <person name="Kyrpides N."/>
            <person name="Kim E."/>
            <person name="McCarthy J.K."/>
            <person name="Richardson P."/>
        </authorList>
    </citation>
    <scope>NUCLEOTIDE SEQUENCE [LARGE SCALE GENOMIC DNA]</scope>
    <source>
        <strain>GB-1</strain>
    </source>
</reference>